<proteinExistence type="inferred from homology"/>
<organism>
    <name type="scientific">Shigella flexneri</name>
    <dbReference type="NCBI Taxonomy" id="623"/>
    <lineage>
        <taxon>Bacteria</taxon>
        <taxon>Pseudomonadati</taxon>
        <taxon>Pseudomonadota</taxon>
        <taxon>Gammaproteobacteria</taxon>
        <taxon>Enterobacterales</taxon>
        <taxon>Enterobacteriaceae</taxon>
        <taxon>Shigella</taxon>
    </lineage>
</organism>
<dbReference type="EC" id="2.7.1.200" evidence="1"/>
<dbReference type="EMBL" id="AE005674">
    <property type="protein sequence ID" value="AAN43688.1"/>
    <property type="molecule type" value="Genomic_DNA"/>
</dbReference>
<dbReference type="EMBL" id="AE014073">
    <property type="protein sequence ID" value="AAP17514.1"/>
    <property type="molecule type" value="Genomic_DNA"/>
</dbReference>
<dbReference type="RefSeq" id="NP_707981.1">
    <property type="nucleotide sequence ID" value="NC_004337.2"/>
</dbReference>
<dbReference type="RefSeq" id="WP_000823288.1">
    <property type="nucleotide sequence ID" value="NZ_WPGW01000098.1"/>
</dbReference>
<dbReference type="BMRB" id="P0A437"/>
<dbReference type="SMR" id="P0A437"/>
<dbReference type="STRING" id="198214.SF2155"/>
<dbReference type="PaxDb" id="198214-SF2155"/>
<dbReference type="GeneID" id="1027334"/>
<dbReference type="KEGG" id="sfl:SF2155"/>
<dbReference type="KEGG" id="sfx:S2281"/>
<dbReference type="PATRIC" id="fig|198214.7.peg.2570"/>
<dbReference type="HOGENOM" id="CLU_159248_3_3_6"/>
<dbReference type="Proteomes" id="UP000001006">
    <property type="component" value="Chromosome"/>
</dbReference>
<dbReference type="Proteomes" id="UP000002673">
    <property type="component" value="Chromosome"/>
</dbReference>
<dbReference type="GO" id="GO:0005737">
    <property type="term" value="C:cytoplasm"/>
    <property type="evidence" value="ECO:0007669"/>
    <property type="project" value="UniProtKB-SubCell"/>
</dbReference>
<dbReference type="GO" id="GO:0008982">
    <property type="term" value="F:protein-N(PI)-phosphohistidine-sugar phosphotransferase activity"/>
    <property type="evidence" value="ECO:0007669"/>
    <property type="project" value="InterPro"/>
</dbReference>
<dbReference type="GO" id="GO:0019402">
    <property type="term" value="P:galactitol metabolic process"/>
    <property type="evidence" value="ECO:0007669"/>
    <property type="project" value="UniProtKB-KW"/>
</dbReference>
<dbReference type="GO" id="GO:0009401">
    <property type="term" value="P:phosphoenolpyruvate-dependent sugar phosphotransferase system"/>
    <property type="evidence" value="ECO:0007669"/>
    <property type="project" value="UniProtKB-KW"/>
</dbReference>
<dbReference type="CDD" id="cd05566">
    <property type="entry name" value="PTS_IIB_galactitol"/>
    <property type="match status" value="1"/>
</dbReference>
<dbReference type="FunFam" id="3.40.50.2300:FF:000166">
    <property type="entry name" value="Galactitol-specific phosphotransferase enzyme IIB component"/>
    <property type="match status" value="1"/>
</dbReference>
<dbReference type="Gene3D" id="3.40.50.2300">
    <property type="match status" value="1"/>
</dbReference>
<dbReference type="InterPro" id="IPR036095">
    <property type="entry name" value="PTS_EIIB-like_sf"/>
</dbReference>
<dbReference type="InterPro" id="IPR013011">
    <property type="entry name" value="PTS_EIIB_2"/>
</dbReference>
<dbReference type="InterPro" id="IPR003501">
    <property type="entry name" value="PTS_EIIB_2/3"/>
</dbReference>
<dbReference type="NCBIfam" id="NF007643">
    <property type="entry name" value="PRK10310.1"/>
    <property type="match status" value="1"/>
</dbReference>
<dbReference type="Pfam" id="PF02302">
    <property type="entry name" value="PTS_IIB"/>
    <property type="match status" value="1"/>
</dbReference>
<dbReference type="SUPFAM" id="SSF52794">
    <property type="entry name" value="PTS system IIB component-like"/>
    <property type="match status" value="1"/>
</dbReference>
<dbReference type="PROSITE" id="PS51099">
    <property type="entry name" value="PTS_EIIB_TYPE_2"/>
    <property type="match status" value="1"/>
</dbReference>
<sequence length="94" mass="10195">MKRKIIVACGGAVATSTMAAEEIKELCQSHNIPVELIQCRVNEIETYMDGVHLICTTARVDRSFGDIPLVHGMPFVSGVGIEALQNKILTILQG</sequence>
<keyword id="KW-0963">Cytoplasm</keyword>
<keyword id="KW-0298">Galactitol metabolism</keyword>
<keyword id="KW-0597">Phosphoprotein</keyword>
<keyword id="KW-0598">Phosphotransferase system</keyword>
<keyword id="KW-1185">Reference proteome</keyword>
<keyword id="KW-0762">Sugar transport</keyword>
<keyword id="KW-0808">Transferase</keyword>
<keyword id="KW-0813">Transport</keyword>
<reference key="1">
    <citation type="journal article" date="2002" name="Nucleic Acids Res.">
        <title>Genome sequence of Shigella flexneri 2a: insights into pathogenicity through comparison with genomes of Escherichia coli K12 and O157.</title>
        <authorList>
            <person name="Jin Q."/>
            <person name="Yuan Z."/>
            <person name="Xu J."/>
            <person name="Wang Y."/>
            <person name="Shen Y."/>
            <person name="Lu W."/>
            <person name="Wang J."/>
            <person name="Liu H."/>
            <person name="Yang J."/>
            <person name="Yang F."/>
            <person name="Zhang X."/>
            <person name="Zhang J."/>
            <person name="Yang G."/>
            <person name="Wu H."/>
            <person name="Qu D."/>
            <person name="Dong J."/>
            <person name="Sun L."/>
            <person name="Xue Y."/>
            <person name="Zhao A."/>
            <person name="Gao Y."/>
            <person name="Zhu J."/>
            <person name="Kan B."/>
            <person name="Ding K."/>
            <person name="Chen S."/>
            <person name="Cheng H."/>
            <person name="Yao Z."/>
            <person name="He B."/>
            <person name="Chen R."/>
            <person name="Ma D."/>
            <person name="Qiang B."/>
            <person name="Wen Y."/>
            <person name="Hou Y."/>
            <person name="Yu J."/>
        </authorList>
    </citation>
    <scope>NUCLEOTIDE SEQUENCE [LARGE SCALE GENOMIC DNA]</scope>
    <source>
        <strain>301 / Serotype 2a</strain>
    </source>
</reference>
<reference key="2">
    <citation type="journal article" date="2003" name="Infect. Immun.">
        <title>Complete genome sequence and comparative genomics of Shigella flexneri serotype 2a strain 2457T.</title>
        <authorList>
            <person name="Wei J."/>
            <person name="Goldberg M.B."/>
            <person name="Burland V."/>
            <person name="Venkatesan M.M."/>
            <person name="Deng W."/>
            <person name="Fournier G."/>
            <person name="Mayhew G.F."/>
            <person name="Plunkett G. III"/>
            <person name="Rose D.J."/>
            <person name="Darling A."/>
            <person name="Mau B."/>
            <person name="Perna N.T."/>
            <person name="Payne S.M."/>
            <person name="Runyen-Janecky L.J."/>
            <person name="Zhou S."/>
            <person name="Schwartz D.C."/>
            <person name="Blattner F.R."/>
        </authorList>
    </citation>
    <scope>NUCLEOTIDE SEQUENCE [LARGE SCALE GENOMIC DNA]</scope>
    <source>
        <strain>ATCC 700930 / 2457T / Serotype 2a</strain>
    </source>
</reference>
<comment type="function">
    <text evidence="1">The phosphoenolpyruvate-dependent sugar phosphotransferase system (PTS), a major carbohydrate active transport system, catalyzes the phosphorylation of incoming sugar substrates concomitant with their translocation across the cell membrane. The enzyme II complex composed of GatA, GatB and GatC is involved in galactitol transport.</text>
</comment>
<comment type="catalytic activity">
    <reaction evidence="1">
        <text>galactitol(out) + N(pros)-phospho-L-histidyl-[protein] = galactitol 1-phosphate(in) + L-histidyl-[protein]</text>
        <dbReference type="Rhea" id="RHEA:49248"/>
        <dbReference type="Rhea" id="RHEA-COMP:9745"/>
        <dbReference type="Rhea" id="RHEA-COMP:9746"/>
        <dbReference type="ChEBI" id="CHEBI:16813"/>
        <dbReference type="ChEBI" id="CHEBI:29979"/>
        <dbReference type="ChEBI" id="CHEBI:60083"/>
        <dbReference type="ChEBI" id="CHEBI:64837"/>
        <dbReference type="EC" id="2.7.1.200"/>
    </reaction>
</comment>
<comment type="subunit">
    <text evidence="1">Forms a complex with one each of subunit of GatA, GatB and 2 subunits of GatC.</text>
</comment>
<comment type="subcellular location">
    <subcellularLocation>
        <location evidence="3">Cytoplasm</location>
    </subcellularLocation>
</comment>
<comment type="induction">
    <text evidence="1">Constitutively expressed.</text>
</comment>
<comment type="domain">
    <text evidence="2">The EIIB domain is phosphorylated by phospho-EIIA on a cysteinyl or histidyl residue, depending on the transported sugar. Then, it transfers the phosphoryl group to the sugar substrate concomitantly with the sugar uptake processed by the EIIC domain.</text>
</comment>
<accession>P0A437</accession>
<accession>Q8X7H5</accession>
<name>PTKB_SHIFL</name>
<evidence type="ECO:0000250" key="1">
    <source>
        <dbReference type="UniProtKB" id="P37188"/>
    </source>
</evidence>
<evidence type="ECO:0000255" key="2">
    <source>
        <dbReference type="PROSITE-ProRule" id="PRU00422"/>
    </source>
</evidence>
<evidence type="ECO:0000305" key="3"/>
<feature type="chain" id="PRO_0000186575" description="PTS system galactitol-specific EIIB component">
    <location>
        <begin position="1"/>
        <end position="94"/>
    </location>
</feature>
<feature type="domain" description="PTS EIIB type-2" evidence="2">
    <location>
        <begin position="1"/>
        <end position="94"/>
    </location>
</feature>
<feature type="active site" description="Phosphocysteine intermediate; for EIIB activity" evidence="3">
    <location>
        <position position="9"/>
    </location>
</feature>
<feature type="modified residue" description="Phosphocysteine; by EIIA" evidence="3">
    <location>
        <position position="9"/>
    </location>
</feature>
<protein>
    <recommendedName>
        <fullName evidence="1">PTS system galactitol-specific EIIB component</fullName>
    </recommendedName>
    <alternativeName>
        <fullName evidence="1">EIIB-Gat</fullName>
    </alternativeName>
    <alternativeName>
        <fullName evidence="1">Galactitol-specific phosphotransferase enzyme IIB component</fullName>
        <ecNumber evidence="1">2.7.1.200</ecNumber>
    </alternativeName>
</protein>
<gene>
    <name type="primary">gatB</name>
    <name type="ordered locus">SF2155</name>
    <name type="ordered locus">S2281</name>
</gene>